<sequence length="217" mass="23567">MKIVGADGQEQEETDIPFRLWRKFAARRKLQYQSWEEGKEVLLNKLDRNLLTDFKAFAARFSSRPRPSKIFGTSLSEAISGEGNGQSGRGAARNHPRARTRCGATSPNHGGRVVPVPVAAASPGAPKKADEAAYRVRGRGRLITRRAGAAHTQPAAIDLGGGFGHCAQEEKEAPFSQARAPAITRGNRGQRGRKRRCGATNGGFQQPTGANQAWQRR</sequence>
<organism>
    <name type="scientific">Human adenovirus C serotype 5</name>
    <name type="common">HAdV-5</name>
    <name type="synonym">Human adenovirus 5</name>
    <dbReference type="NCBI Taxonomy" id="28285"/>
    <lineage>
        <taxon>Viruses</taxon>
        <taxon>Varidnaviria</taxon>
        <taxon>Bamfordvirae</taxon>
        <taxon>Preplasmiviricota</taxon>
        <taxon>Tectiliviricetes</taxon>
        <taxon>Rowavirales</taxon>
        <taxon>Adenoviridae</taxon>
        <taxon>Mastadenovirus</taxon>
        <taxon>Human mastadenovirus C</taxon>
    </lineage>
</organism>
<comment type="function">
    <text evidence="2">Might play a role in viral replication since it is associated with viral replication centers. Seems to have an effect on DBP localization.</text>
</comment>
<comment type="subcellular location">
    <subcellularLocation>
        <location evidence="2">Host nucleus</location>
        <location evidence="2">Host nucleoplasm</location>
    </subcellularLocation>
    <subcellularLocation>
        <location evidence="2">Host nucleus</location>
        <location evidence="2">Host nucleolus</location>
    </subcellularLocation>
    <text>At 18 to 24 hours postinfection, UXP is strongly associated with nucleoli and is found throughout the nucleus. Later, UXP is associated with the periphery of replication centers.</text>
</comment>
<comment type="induction">
    <text>Expressed abundantly in the late phase of the viral replicative cycle.</text>
</comment>
<comment type="similarity">
    <text evidence="3">Belongs to the adenoviridae U exon protein family.</text>
</comment>
<protein>
    <recommendedName>
        <fullName>U exon protein</fullName>
        <shortName>UXP</shortName>
    </recommendedName>
</protein>
<reference key="1">
    <citation type="journal article" date="1992" name="Virology">
        <title>The sequence of the genome of adenovirus type 5 and its comparison with the genome of adenovirus type 2.</title>
        <authorList>
            <person name="Chroboczek J."/>
            <person name="Bieber F."/>
            <person name="Jacrot B."/>
        </authorList>
    </citation>
    <scope>NUCLEOTIDE SEQUENCE [GENOMIC DNA]</scope>
</reference>
<reference key="2">
    <citation type="journal article" date="2007" name="J. Virol.">
        <title>Identification of a new human adenovirus protein encoded by a novel late l-strand transcription unit.</title>
        <authorList>
            <person name="Tollefson A.E."/>
            <person name="Ying B."/>
            <person name="Doronin K."/>
            <person name="Sidor P.D."/>
            <person name="Wold W.S."/>
        </authorList>
    </citation>
    <scope>NUCLEOTIDE SEQUENCE [MRNA]</scope>
    <scope>SUBCELLULAR LOCATION</scope>
    <scope>FUNCTION</scope>
    <source>
        <strain>ATCC VR-5</strain>
    </source>
</reference>
<accession>A8W995</accession>
<name>UXP_ADE05</name>
<feature type="chain" id="PRO_0000421141" description="U exon protein">
    <location>
        <begin position="1"/>
        <end position="217"/>
    </location>
</feature>
<feature type="region of interest" description="Disordered" evidence="1">
    <location>
        <begin position="79"/>
        <end position="113"/>
    </location>
</feature>
<feature type="region of interest" description="Disordered" evidence="1">
    <location>
        <begin position="171"/>
        <end position="217"/>
    </location>
</feature>
<feature type="compositionally biased region" description="Basic residues" evidence="1">
    <location>
        <begin position="188"/>
        <end position="197"/>
    </location>
</feature>
<feature type="compositionally biased region" description="Polar residues" evidence="1">
    <location>
        <begin position="202"/>
        <end position="217"/>
    </location>
</feature>
<keyword id="KW-1048">Host nucleus</keyword>
<keyword id="KW-0426">Late protein</keyword>
<keyword id="KW-1185">Reference proteome</keyword>
<organismHost>
    <name type="scientific">Homo sapiens</name>
    <name type="common">Human</name>
    <dbReference type="NCBI Taxonomy" id="9606"/>
</organismHost>
<proteinExistence type="evidence at transcript level"/>
<dbReference type="EMBL" id="M73260">
    <property type="status" value="NOT_ANNOTATED_CDS"/>
    <property type="molecule type" value="Genomic_DNA"/>
</dbReference>
<dbReference type="EMBL" id="EU202643">
    <property type="protein sequence ID" value="ABW72885.1"/>
    <property type="molecule type" value="mRNA"/>
</dbReference>
<dbReference type="Proteomes" id="UP000004992">
    <property type="component" value="Genome"/>
</dbReference>
<dbReference type="GO" id="GO:0044196">
    <property type="term" value="C:host cell nucleolus"/>
    <property type="evidence" value="ECO:0007669"/>
    <property type="project" value="UniProtKB-SubCell"/>
</dbReference>
<dbReference type="GO" id="GO:0044095">
    <property type="term" value="C:host cell nucleoplasm"/>
    <property type="evidence" value="ECO:0007669"/>
    <property type="project" value="UniProtKB-SubCell"/>
</dbReference>
<evidence type="ECO:0000256" key="1">
    <source>
        <dbReference type="SAM" id="MobiDB-lite"/>
    </source>
</evidence>
<evidence type="ECO:0000269" key="2">
    <source>
    </source>
</evidence>
<evidence type="ECO:0000305" key="3"/>